<evidence type="ECO:0000269" key="1">
    <source>
    </source>
</evidence>
<evidence type="ECO:0000303" key="2">
    <source>
    </source>
</evidence>
<evidence type="ECO:0000305" key="3"/>
<keyword id="KW-0150">Chloroplast</keyword>
<keyword id="KW-0903">Direct protein sequencing</keyword>
<keyword id="KW-0934">Plastid</keyword>
<keyword id="KW-0793">Thylakoid</keyword>
<reference evidence="3" key="1">
    <citation type="journal article" date="2000" name="Plant Cell">
        <title>Proteomics of the chloroplast: systematic identification and targeting analysis of lumenal and peripheral thylakoid proteins.</title>
        <authorList>
            <person name="Peltier J.-B."/>
            <person name="Friso G."/>
            <person name="Kalume D.E."/>
            <person name="Roepstorff P."/>
            <person name="Nilsson F."/>
            <person name="Adamska I."/>
            <person name="van Wijk K.J."/>
        </authorList>
    </citation>
    <scope>PROTEIN SEQUENCE</scope>
    <scope>SUBCELLULAR LOCATION</scope>
    <source>
        <strain evidence="1">cv. De Grace</strain>
        <tissue evidence="1">Leaf</tissue>
    </source>
</reference>
<organism>
    <name type="scientific">Pisum sativum</name>
    <name type="common">Garden pea</name>
    <name type="synonym">Lathyrus oleraceus</name>
    <dbReference type="NCBI Taxonomy" id="3888"/>
    <lineage>
        <taxon>Eukaryota</taxon>
        <taxon>Viridiplantae</taxon>
        <taxon>Streptophyta</taxon>
        <taxon>Embryophyta</taxon>
        <taxon>Tracheophyta</taxon>
        <taxon>Spermatophyta</taxon>
        <taxon>Magnoliopsida</taxon>
        <taxon>eudicotyledons</taxon>
        <taxon>Gunneridae</taxon>
        <taxon>Pentapetalae</taxon>
        <taxon>rosids</taxon>
        <taxon>fabids</taxon>
        <taxon>Fabales</taxon>
        <taxon>Fabaceae</taxon>
        <taxon>Papilionoideae</taxon>
        <taxon>50 kb inversion clade</taxon>
        <taxon>NPAAA clade</taxon>
        <taxon>Hologalegina</taxon>
        <taxon>IRL clade</taxon>
        <taxon>Fabeae</taxon>
        <taxon>Pisum</taxon>
    </lineage>
</organism>
<feature type="chain" id="PRO_0000234469" description="Unknown protein from spot 106 of 2D-PAGE of thylakoid">
    <location>
        <begin position="1"/>
        <end position="12" status="greater than"/>
    </location>
</feature>
<feature type="non-terminal residue" evidence="2">
    <location>
        <position position="12"/>
    </location>
</feature>
<sequence length="12" mass="1236">AKAGVNKPELLP</sequence>
<protein>
    <recommendedName>
        <fullName>Unknown protein from spot 106 of 2D-PAGE of thylakoid</fullName>
    </recommendedName>
</protein>
<accession>P82325</accession>
<proteinExistence type="evidence at protein level"/>
<dbReference type="GO" id="GO:0009534">
    <property type="term" value="C:chloroplast thylakoid"/>
    <property type="evidence" value="ECO:0007669"/>
    <property type="project" value="UniProtKB-SubCell"/>
</dbReference>
<name>UT106_PEA</name>
<comment type="subcellular location">
    <subcellularLocation>
        <location evidence="1">Plastid</location>
        <location evidence="1">Chloroplast thylakoid</location>
    </subcellularLocation>
</comment>
<comment type="miscellaneous">
    <text evidence="1">On the 2D-gel the determined pI of this protein is: 5.3, its MW is: 18.2 kDa.</text>
</comment>